<protein>
    <recommendedName>
        <fullName evidence="1">Trehalose phosphorylase</fullName>
        <ecNumber>2.4.1.231</ecNumber>
    </recommendedName>
    <alternativeName>
        <fullName evidence="9">Trehalose synthase</fullName>
        <shortName evidence="4 5">TSase</shortName>
    </alternativeName>
</protein>
<organism>
    <name type="scientific">Grifola frondosa</name>
    <name type="common">Maitake</name>
    <name type="synonym">Polyporus frondosus</name>
    <dbReference type="NCBI Taxonomy" id="5627"/>
    <lineage>
        <taxon>Eukaryota</taxon>
        <taxon>Fungi</taxon>
        <taxon>Dikarya</taxon>
        <taxon>Basidiomycota</taxon>
        <taxon>Agaricomycotina</taxon>
        <taxon>Agaricomycetes</taxon>
        <taxon>Polyporales</taxon>
        <taxon>Grifolaceae</taxon>
        <taxon>Grifola</taxon>
    </lineage>
</organism>
<reference evidence="6 8" key="1">
    <citation type="journal article" date="1998" name="Appl. Microbiol. Biotechnol.">
        <title>Production of trehalose synthase from a basidiomycete, Grifola frondosa, in Escherichia coli.</title>
        <authorList>
            <person name="Saito K."/>
            <person name="Yamazaki H."/>
            <person name="Ohnishi Y."/>
            <person name="Fujimoto S."/>
            <person name="Takahashi E."/>
            <person name="Horinouchi S."/>
        </authorList>
    </citation>
    <scope>NUCLEOTIDE SEQUENCE [GENOMIC DNA / MRNA]</scope>
    <scope>PROTEIN SEQUENCE OF 26-46; 91-98; 240-251; 256-271; 387-402; 564-578; 606-614 AND 697-708</scope>
    <scope>FUNCTION</scope>
    <scope>CATALYTIC ACTIVITY</scope>
    <source>
        <strain evidence="2">CM-236 / FERM BP-35</strain>
        <tissue evidence="2">Mycelium</tissue>
    </source>
</reference>
<reference evidence="7" key="2">
    <citation type="submission" date="2010-07" db="EMBL/GenBank/DDBJ databases">
        <title>Overexpression of trehalose synthase gene from Grifola frondosa in Pleurotus ostreatus.</title>
        <authorList>
            <person name="Xu F."/>
            <person name="Liu Y."/>
            <person name="Wang S."/>
            <person name="Zhao S."/>
            <person name="Geng X."/>
            <person name="Meng L."/>
        </authorList>
    </citation>
    <scope>NUCLEOTIDE SEQUENCE [MRNA]</scope>
</reference>
<reference evidence="6" key="3">
    <citation type="journal article" date="1998" name="Appl. Environ. Microbiol.">
        <title>Purification and characterization of a trehalose synthase from the basidiomycete Grifola frondosa.</title>
        <authorList>
            <person name="Saito K."/>
            <person name="Kase T."/>
            <person name="Takahashi E."/>
            <person name="Horinouchi S."/>
        </authorList>
    </citation>
    <scope>FUNCTION</scope>
    <scope>CATALYTIC ACTIVITY</scope>
    <scope>ACTIVITY REGULATION</scope>
    <scope>BIOPHYSICOCHEMICAL PROPERTIES</scope>
    <scope>SUBUNIT</scope>
    <source>
        <strain evidence="3">CM-236 / FERM BP-35</strain>
    </source>
</reference>
<feature type="propeptide" id="PRO_0000405293" evidence="2">
    <location>
        <begin position="1"/>
        <end position="25"/>
    </location>
</feature>
<feature type="chain" id="PRO_0000405294" description="Trehalose phosphorylase" evidence="2">
    <location>
        <begin position="26"/>
        <end position="732"/>
    </location>
</feature>
<feature type="sequence conflict" description="In Ref. 2; ADM15725." evidence="6" ref="2">
    <original>I</original>
    <variation>V</variation>
    <location>
        <position position="30"/>
    </location>
</feature>
<feature type="sequence conflict" description="In Ref. 2; ADM15725." evidence="6" ref="2">
    <original>T</original>
    <variation>S</variation>
    <location>
        <position position="52"/>
    </location>
</feature>
<feature type="sequence conflict" description="In Ref. 2; ADM15725." evidence="6" ref="2">
    <original>V</original>
    <variation>I</variation>
    <location>
        <position position="73"/>
    </location>
</feature>
<feature type="sequence conflict" description="In Ref. 2; ADM15725." evidence="6" ref="2">
    <original>M</original>
    <variation>V</variation>
    <location>
        <position position="378"/>
    </location>
</feature>
<feature type="sequence conflict" description="In Ref. 2; ADM15725." evidence="6" ref="2">
    <original>S</original>
    <variation>A</variation>
    <location>
        <position position="471"/>
    </location>
</feature>
<feature type="sequence conflict" description="In Ref. 2; ADM15725." evidence="6" ref="2">
    <original>V</original>
    <variation>I</variation>
    <location>
        <position position="483"/>
    </location>
</feature>
<feature type="sequence conflict" description="In Ref. 2; ADM15725." evidence="6" ref="2">
    <original>E</original>
    <variation>D</variation>
    <location>
        <position position="496"/>
    </location>
</feature>
<feature type="sequence conflict" description="In Ref. 2; ADM15725." evidence="6" ref="2">
    <original>P</original>
    <variation>A</variation>
    <location>
        <position position="718"/>
    </location>
</feature>
<comment type="function">
    <text evidence="2 3">Reversibly catalyzes the synthesis and degradation of trehalose from glucose and alpha-D-glucose 1-phosphate. The equilibrium lies in the direction of trehalose synthesis.</text>
</comment>
<comment type="catalytic activity">
    <reaction evidence="2 3">
        <text>alpha,alpha-trehalose + phosphate = alpha-D-glucose + alpha-D-glucose 1-phosphate</text>
        <dbReference type="Rhea" id="RHEA:16257"/>
        <dbReference type="ChEBI" id="CHEBI:16551"/>
        <dbReference type="ChEBI" id="CHEBI:17925"/>
        <dbReference type="ChEBI" id="CHEBI:43474"/>
        <dbReference type="ChEBI" id="CHEBI:58601"/>
        <dbReference type="EC" id="2.4.1.231"/>
    </reaction>
</comment>
<comment type="activity regulation">
    <text evidence="3">Activity abolished by 1 mM Cu(2+). 0.1 mM Cu(2+) reduces trehalose phosphorolysis to 76% and trehalose synthesis to 48% of maximum activity. 1 mM Zn(2+) abolishes trehalose synthesis, and reduces trehalose phosphorolysis to 40% of maximum activity. Unaffected by EDTA.</text>
</comment>
<comment type="biophysicochemical properties">
    <phDependence>
        <text evidence="3">Optimum pH is 6.5 for trehalose phosphorolysis activity, 6.5-6.8 for trehalose synthesis activity.</text>
    </phDependence>
    <temperatureDependence>
        <text evidence="3">Optimum temperature is 32.5 degrees Celsius for trehalose phosphorolysis activity, 37.5 degrees Celsius for trehalose synthesis activity. Stable up to 35 degrees Celsius for trehalose phosphorolysis activity, 32.5 degrees Celsius for trehalose synthesis activity.</text>
    </temperatureDependence>
</comment>
<comment type="subunit">
    <text evidence="3">Homodimer.</text>
</comment>
<comment type="similarity">
    <text evidence="6">Belongs to the glycosyltransferase group 1 family. Glycosyltransferase 4 subfamily.</text>
</comment>
<sequence>MAPPHQFQSKPSDVIRRRLSSAVSSKRPNIPGYTSLTPMWAGIAGAVVNNNTQFEVAISIHDSVYNTDFASSVVPYSPNEPEAQAGIIEKHVLETLRKFSTEHMCKFLGAGVTVILLREAPNLCTRLWLDMDIVPIVFNIKPFHTDSITRPNVRHRISSTTGSYVPSGAETPTVYYDPAQLQDPNKLSANVQTRLPIPRTVDEQADSAARKCIMYFGPGNNPRLQIGPRNQVAVDAGGKIHLIDDIDEYRKTVGKGTWNSVIKLADELREKKIKIGFFSSTPQGGGVALMRHAIIRFFTALDVDAAWYVPNPSPSVFRTTKNNHNILQGVADPSLRLTKEAADNFDSWILKNGLRWTAEGGPLAPGGVDIAFIDDPQMPGLIPLIKRIRPDLPIIYRSHIEIRSDLVHVKGSPQEEVWNYLWNNIQHSDLFISHPVNKFVPSDVPLEKLALLGAATDWLDGLSKHLDAWDSQYYMGEFRNLCVKEKMNELGWPAREYIVQIARFDPSKGIPNVIDSYARFRKLCVDKVMEDDIPQLLLCGHGAVDDPDASIIYDQVLQLIHAKYKEYAPDIVVMRCPPSDQLLNTLMANAKFALQLSTREGFEVKVSEALHAGKPVIACRTGGIPLQIEHGKSGYLCEPGDNAAVAQHMLDLYTDEDLYDTMSEYARTHVSDEVGTVGNAAAWMYLAVMYVSRGVKLRPHGAWINDLMRTEMGEPYRPGEPRLPRGELHVQG</sequence>
<name>TREPH_GRIFR</name>
<dbReference type="EC" id="2.4.1.231"/>
<dbReference type="EMBL" id="AB010104">
    <property type="protein sequence ID" value="BAA31349.1"/>
    <property type="molecule type" value="Genomic_DNA"/>
</dbReference>
<dbReference type="EMBL" id="AB010105">
    <property type="protein sequence ID" value="BAA31350.1"/>
    <property type="molecule type" value="mRNA"/>
</dbReference>
<dbReference type="EMBL" id="HM631875">
    <property type="protein sequence ID" value="ADM15725.1"/>
    <property type="molecule type" value="mRNA"/>
</dbReference>
<dbReference type="PIR" id="T00130">
    <property type="entry name" value="T00130"/>
</dbReference>
<dbReference type="SMR" id="O75003"/>
<dbReference type="CAZy" id="GT4">
    <property type="family name" value="Glycosyltransferase Family 4"/>
</dbReference>
<dbReference type="BioCyc" id="MetaCyc:MONOMER-5943"/>
<dbReference type="GO" id="GO:0033832">
    <property type="term" value="F:alpha,alpha-trehalose phosphorylase (configuration-retaining) activity"/>
    <property type="evidence" value="ECO:0000314"/>
    <property type="project" value="UniProtKB"/>
</dbReference>
<dbReference type="GO" id="GO:0051156">
    <property type="term" value="P:glucose 6-phosphate metabolic process"/>
    <property type="evidence" value="ECO:0000314"/>
    <property type="project" value="UniProtKB"/>
</dbReference>
<dbReference type="GO" id="GO:0006006">
    <property type="term" value="P:glucose metabolic process"/>
    <property type="evidence" value="ECO:0000314"/>
    <property type="project" value="UniProtKB"/>
</dbReference>
<dbReference type="GO" id="GO:0005991">
    <property type="term" value="P:trehalose metabolic process"/>
    <property type="evidence" value="ECO:0000314"/>
    <property type="project" value="UniProtKB"/>
</dbReference>
<dbReference type="CDD" id="cd03792">
    <property type="entry name" value="GT4_trehalose_phosphorylase"/>
    <property type="match status" value="1"/>
</dbReference>
<dbReference type="Gene3D" id="3.40.50.2000">
    <property type="entry name" value="Glycogen Phosphorylase B"/>
    <property type="match status" value="2"/>
</dbReference>
<dbReference type="InterPro" id="IPR001296">
    <property type="entry name" value="Glyco_trans_1"/>
</dbReference>
<dbReference type="InterPro" id="IPR052078">
    <property type="entry name" value="Trehalose_Metab_GTase"/>
</dbReference>
<dbReference type="InterPro" id="IPR049438">
    <property type="entry name" value="TreT_GT1"/>
</dbReference>
<dbReference type="PANTHER" id="PTHR47779">
    <property type="entry name" value="SYNTHASE (CCG-9), PUTATIVE (AFU_ORTHOLOGUE AFUA_3G12100)-RELATED"/>
    <property type="match status" value="1"/>
</dbReference>
<dbReference type="PANTHER" id="PTHR47779:SF1">
    <property type="entry name" value="SYNTHASE (CCG-9), PUTATIVE (AFU_ORTHOLOGUE AFUA_3G12100)-RELATED"/>
    <property type="match status" value="1"/>
</dbReference>
<dbReference type="Pfam" id="PF00534">
    <property type="entry name" value="Glycos_transf_1"/>
    <property type="match status" value="1"/>
</dbReference>
<dbReference type="Pfam" id="PF21269">
    <property type="entry name" value="TreT_GT1"/>
    <property type="match status" value="1"/>
</dbReference>
<dbReference type="SUPFAM" id="SSF53756">
    <property type="entry name" value="UDP-Glycosyltransferase/glycogen phosphorylase"/>
    <property type="match status" value="1"/>
</dbReference>
<evidence type="ECO:0000250" key="1">
    <source>
        <dbReference type="UniProtKB" id="Q9UV63"/>
    </source>
</evidence>
<evidence type="ECO:0000269" key="2">
    <source>
    </source>
</evidence>
<evidence type="ECO:0000269" key="3">
    <source>
    </source>
</evidence>
<evidence type="ECO:0000303" key="4">
    <source>
    </source>
</evidence>
<evidence type="ECO:0000303" key="5">
    <source>
    </source>
</evidence>
<evidence type="ECO:0000305" key="6"/>
<evidence type="ECO:0000312" key="7">
    <source>
        <dbReference type="EMBL" id="ADM15725.1"/>
    </source>
</evidence>
<evidence type="ECO:0000312" key="8">
    <source>
        <dbReference type="EMBL" id="BAA31349.1"/>
    </source>
</evidence>
<evidence type="ECO:0000312" key="9">
    <source>
        <dbReference type="EMBL" id="BAA31350.1"/>
    </source>
</evidence>
<proteinExistence type="evidence at protein level"/>
<accession>O75003</accession>
<accession>E1ACW7</accession>
<keyword id="KW-0119">Carbohydrate metabolism</keyword>
<keyword id="KW-0903">Direct protein sequencing</keyword>
<keyword id="KW-0313">Glucose metabolism</keyword>
<keyword id="KW-0328">Glycosyltransferase</keyword>
<keyword id="KW-0808">Transferase</keyword>